<gene>
    <name evidence="1" type="primary">cobB</name>
    <name type="ordered locus">TK0685</name>
</gene>
<evidence type="ECO:0000255" key="1">
    <source>
        <dbReference type="HAMAP-Rule" id="MF_01121"/>
    </source>
</evidence>
<evidence type="ECO:0000255" key="2">
    <source>
        <dbReference type="PROSITE-ProRule" id="PRU00236"/>
    </source>
</evidence>
<keyword id="KW-0963">Cytoplasm</keyword>
<keyword id="KW-0479">Metal-binding</keyword>
<keyword id="KW-0520">NAD</keyword>
<keyword id="KW-1185">Reference proteome</keyword>
<keyword id="KW-0804">Transcription</keyword>
<keyword id="KW-0805">Transcription regulation</keyword>
<keyword id="KW-0808">Transferase</keyword>
<keyword id="KW-0862">Zinc</keyword>
<feature type="chain" id="PRO_0000110386" description="NAD-dependent protein deacylase">
    <location>
        <begin position="1"/>
        <end position="257"/>
    </location>
</feature>
<feature type="domain" description="Deacetylase sirtuin-type" evidence="2">
    <location>
        <begin position="1"/>
        <end position="252"/>
    </location>
</feature>
<feature type="active site" description="Proton acceptor" evidence="2">
    <location>
        <position position="116"/>
    </location>
</feature>
<feature type="binding site" evidence="1">
    <location>
        <begin position="20"/>
        <end position="39"/>
    </location>
    <ligand>
        <name>NAD(+)</name>
        <dbReference type="ChEBI" id="CHEBI:57540"/>
    </ligand>
</feature>
<feature type="binding site" evidence="1">
    <location>
        <position position="64"/>
    </location>
    <ligand>
        <name>substrate</name>
    </ligand>
</feature>
<feature type="binding site" evidence="1">
    <location>
        <position position="67"/>
    </location>
    <ligand>
        <name>substrate</name>
    </ligand>
</feature>
<feature type="binding site" evidence="1">
    <location>
        <begin position="98"/>
        <end position="101"/>
    </location>
    <ligand>
        <name>NAD(+)</name>
        <dbReference type="ChEBI" id="CHEBI:57540"/>
    </ligand>
</feature>
<feature type="binding site" evidence="1">
    <location>
        <position position="124"/>
    </location>
    <ligand>
        <name>Zn(2+)</name>
        <dbReference type="ChEBI" id="CHEBI:29105"/>
    </ligand>
</feature>
<feature type="binding site" evidence="1">
    <location>
        <position position="127"/>
    </location>
    <ligand>
        <name>Zn(2+)</name>
        <dbReference type="ChEBI" id="CHEBI:29105"/>
    </ligand>
</feature>
<feature type="binding site" evidence="1">
    <location>
        <position position="151"/>
    </location>
    <ligand>
        <name>Zn(2+)</name>
        <dbReference type="ChEBI" id="CHEBI:29105"/>
    </ligand>
</feature>
<feature type="binding site" evidence="1">
    <location>
        <position position="154"/>
    </location>
    <ligand>
        <name>Zn(2+)</name>
        <dbReference type="ChEBI" id="CHEBI:29105"/>
    </ligand>
</feature>
<feature type="binding site" evidence="1">
    <location>
        <begin position="191"/>
        <end position="193"/>
    </location>
    <ligand>
        <name>NAD(+)</name>
        <dbReference type="ChEBI" id="CHEBI:57540"/>
    </ligand>
</feature>
<feature type="binding site" evidence="1">
    <location>
        <begin position="217"/>
        <end position="219"/>
    </location>
    <ligand>
        <name>NAD(+)</name>
        <dbReference type="ChEBI" id="CHEBI:57540"/>
    </ligand>
</feature>
<feature type="binding site" evidence="1">
    <location>
        <position position="235"/>
    </location>
    <ligand>
        <name>NAD(+)</name>
        <dbReference type="ChEBI" id="CHEBI:57540"/>
    </ligand>
</feature>
<dbReference type="EC" id="2.3.1.286" evidence="1 2"/>
<dbReference type="EMBL" id="AP006878">
    <property type="protein sequence ID" value="BAD84874.1"/>
    <property type="molecule type" value="Genomic_DNA"/>
</dbReference>
<dbReference type="RefSeq" id="WP_011249636.1">
    <property type="nucleotide sequence ID" value="NC_006624.1"/>
</dbReference>
<dbReference type="SMR" id="Q5JG47"/>
<dbReference type="STRING" id="69014.TK0685"/>
<dbReference type="EnsemblBacteria" id="BAD84874">
    <property type="protein sequence ID" value="BAD84874"/>
    <property type="gene ID" value="TK0685"/>
</dbReference>
<dbReference type="GeneID" id="78447199"/>
<dbReference type="KEGG" id="tko:TK0685"/>
<dbReference type="PATRIC" id="fig|69014.16.peg.666"/>
<dbReference type="eggNOG" id="arCOG04248">
    <property type="taxonomic scope" value="Archaea"/>
</dbReference>
<dbReference type="HOGENOM" id="CLU_023643_3_1_2"/>
<dbReference type="InParanoid" id="Q5JG47"/>
<dbReference type="OrthoDB" id="728at2157"/>
<dbReference type="PhylomeDB" id="Q5JG47"/>
<dbReference type="Proteomes" id="UP000000536">
    <property type="component" value="Chromosome"/>
</dbReference>
<dbReference type="GO" id="GO:0005737">
    <property type="term" value="C:cytoplasm"/>
    <property type="evidence" value="ECO:0007669"/>
    <property type="project" value="UniProtKB-SubCell"/>
</dbReference>
<dbReference type="GO" id="GO:0017136">
    <property type="term" value="F:histone deacetylase activity, NAD-dependent"/>
    <property type="evidence" value="ECO:0000318"/>
    <property type="project" value="GO_Central"/>
</dbReference>
<dbReference type="GO" id="GO:0070403">
    <property type="term" value="F:NAD+ binding"/>
    <property type="evidence" value="ECO:0000318"/>
    <property type="project" value="GO_Central"/>
</dbReference>
<dbReference type="GO" id="GO:0036054">
    <property type="term" value="F:protein-malonyllysine demalonylase activity"/>
    <property type="evidence" value="ECO:0007669"/>
    <property type="project" value="InterPro"/>
</dbReference>
<dbReference type="GO" id="GO:0036055">
    <property type="term" value="F:protein-succinyllysine desuccinylase activity"/>
    <property type="evidence" value="ECO:0007669"/>
    <property type="project" value="UniProtKB-UniRule"/>
</dbReference>
<dbReference type="GO" id="GO:0008270">
    <property type="term" value="F:zinc ion binding"/>
    <property type="evidence" value="ECO:0007669"/>
    <property type="project" value="UniProtKB-UniRule"/>
</dbReference>
<dbReference type="CDD" id="cd01412">
    <property type="entry name" value="SIRT5_Af1_CobB"/>
    <property type="match status" value="1"/>
</dbReference>
<dbReference type="Gene3D" id="3.30.1600.10">
    <property type="entry name" value="SIR2/SIRT2 'Small Domain"/>
    <property type="match status" value="1"/>
</dbReference>
<dbReference type="Gene3D" id="3.40.50.1220">
    <property type="entry name" value="TPP-binding domain"/>
    <property type="match status" value="1"/>
</dbReference>
<dbReference type="HAMAP" id="MF_01121">
    <property type="entry name" value="Sirtuin_ClassIII"/>
    <property type="match status" value="1"/>
</dbReference>
<dbReference type="InterPro" id="IPR029035">
    <property type="entry name" value="DHS-like_NAD/FAD-binding_dom"/>
</dbReference>
<dbReference type="InterPro" id="IPR050134">
    <property type="entry name" value="NAD-dep_sirtuin_deacylases"/>
</dbReference>
<dbReference type="InterPro" id="IPR003000">
    <property type="entry name" value="Sirtuin"/>
</dbReference>
<dbReference type="InterPro" id="IPR026591">
    <property type="entry name" value="Sirtuin_cat_small_dom_sf"/>
</dbReference>
<dbReference type="InterPro" id="IPR027546">
    <property type="entry name" value="Sirtuin_class_III"/>
</dbReference>
<dbReference type="InterPro" id="IPR026590">
    <property type="entry name" value="Ssirtuin_cat_dom"/>
</dbReference>
<dbReference type="NCBIfam" id="NF001753">
    <property type="entry name" value="PRK00481.1-3"/>
    <property type="match status" value="1"/>
</dbReference>
<dbReference type="NCBIfam" id="NF040867">
    <property type="entry name" value="prot_deacyl_CobB"/>
    <property type="match status" value="1"/>
</dbReference>
<dbReference type="PANTHER" id="PTHR11085">
    <property type="entry name" value="NAD-DEPENDENT PROTEIN DEACYLASE SIRTUIN-5, MITOCHONDRIAL-RELATED"/>
    <property type="match status" value="1"/>
</dbReference>
<dbReference type="PANTHER" id="PTHR11085:SF10">
    <property type="entry name" value="NAD-DEPENDENT PROTEIN DEACYLASE SIRTUIN-5, MITOCHONDRIAL-RELATED"/>
    <property type="match status" value="1"/>
</dbReference>
<dbReference type="Pfam" id="PF02146">
    <property type="entry name" value="SIR2"/>
    <property type="match status" value="1"/>
</dbReference>
<dbReference type="SUPFAM" id="SSF52467">
    <property type="entry name" value="DHS-like NAD/FAD-binding domain"/>
    <property type="match status" value="1"/>
</dbReference>
<dbReference type="PROSITE" id="PS50305">
    <property type="entry name" value="SIRTUIN"/>
    <property type="match status" value="1"/>
</dbReference>
<proteinExistence type="inferred from homology"/>
<sequence length="257" mass="28899">MLGHAAKLLARARFAIAFTGAGISAESGIPTFRGRNGLWKTYRAEELATPEAFKRDPHLVWEFYKWRMRKILKAEPNPAHKALAELENMGVLKAVITQNVDDLHREAGSRKVVELHGNIFRVRCVSCSYRENLKESGRVFEFVREKELPKCPKCGSLLRPDVVWFGEPLPREALEEAFSLAERADVVLVVGTSGVVYPAAYVPYIVKERGGKVIEVNVERSGITPIADVFIRGKAGEVMPELLRRVKDIMAERNHYG</sequence>
<reference key="1">
    <citation type="journal article" date="2005" name="Genome Res.">
        <title>Complete genome sequence of the hyperthermophilic archaeon Thermococcus kodakaraensis KOD1 and comparison with Pyrococcus genomes.</title>
        <authorList>
            <person name="Fukui T."/>
            <person name="Atomi H."/>
            <person name="Kanai T."/>
            <person name="Matsumi R."/>
            <person name="Fujiwara S."/>
            <person name="Imanaka T."/>
        </authorList>
    </citation>
    <scope>NUCLEOTIDE SEQUENCE [LARGE SCALE GENOMIC DNA]</scope>
    <source>
        <strain>ATCC BAA-918 / JCM 12380 / KOD1</strain>
    </source>
</reference>
<accession>Q5JG47</accession>
<organism>
    <name type="scientific">Thermococcus kodakarensis (strain ATCC BAA-918 / JCM 12380 / KOD1)</name>
    <name type="common">Pyrococcus kodakaraensis (strain KOD1)</name>
    <dbReference type="NCBI Taxonomy" id="69014"/>
    <lineage>
        <taxon>Archaea</taxon>
        <taxon>Methanobacteriati</taxon>
        <taxon>Methanobacteriota</taxon>
        <taxon>Thermococci</taxon>
        <taxon>Thermococcales</taxon>
        <taxon>Thermococcaceae</taxon>
        <taxon>Thermococcus</taxon>
    </lineage>
</organism>
<name>NPD_THEKO</name>
<comment type="function">
    <text evidence="1">NAD-dependent lysine deacetylase and desuccinylase that specifically removes acetyl and succinyl groups on target proteins. Modulates the activities of several proteins which are inactive in their acylated form. Deacetylates the N-terminal lysine residue of Alba, the major archaeal chromatin protein and that, in turn, increases Alba's DNA binding affinity, thereby repressing transcription.</text>
</comment>
<comment type="catalytic activity">
    <reaction evidence="1">
        <text>N(6)-acetyl-L-lysyl-[protein] + NAD(+) + H2O = 2''-O-acetyl-ADP-D-ribose + nicotinamide + L-lysyl-[protein]</text>
        <dbReference type="Rhea" id="RHEA:43636"/>
        <dbReference type="Rhea" id="RHEA-COMP:9752"/>
        <dbReference type="Rhea" id="RHEA-COMP:10731"/>
        <dbReference type="ChEBI" id="CHEBI:15377"/>
        <dbReference type="ChEBI" id="CHEBI:17154"/>
        <dbReference type="ChEBI" id="CHEBI:29969"/>
        <dbReference type="ChEBI" id="CHEBI:57540"/>
        <dbReference type="ChEBI" id="CHEBI:61930"/>
        <dbReference type="ChEBI" id="CHEBI:83767"/>
        <dbReference type="EC" id="2.3.1.286"/>
    </reaction>
</comment>
<comment type="catalytic activity">
    <reaction evidence="1">
        <text>N(6)-succinyl-L-lysyl-[protein] + NAD(+) + H2O = 2''-O-succinyl-ADP-D-ribose + nicotinamide + L-lysyl-[protein]</text>
        <dbReference type="Rhea" id="RHEA:47668"/>
        <dbReference type="Rhea" id="RHEA-COMP:9752"/>
        <dbReference type="Rhea" id="RHEA-COMP:11877"/>
        <dbReference type="ChEBI" id="CHEBI:15377"/>
        <dbReference type="ChEBI" id="CHEBI:17154"/>
        <dbReference type="ChEBI" id="CHEBI:29969"/>
        <dbReference type="ChEBI" id="CHEBI:57540"/>
        <dbReference type="ChEBI" id="CHEBI:87830"/>
        <dbReference type="ChEBI" id="CHEBI:87832"/>
    </reaction>
</comment>
<comment type="cofactor">
    <cofactor evidence="1">
        <name>Zn(2+)</name>
        <dbReference type="ChEBI" id="CHEBI:29105"/>
    </cofactor>
    <text evidence="1">Binds 1 zinc ion per subunit.</text>
</comment>
<comment type="subcellular location">
    <subcellularLocation>
        <location evidence="1">Cytoplasm</location>
    </subcellularLocation>
</comment>
<comment type="domain">
    <text evidence="1">2 residues (Tyr-64 and Arg-67) present in a large hydrophobic pocket are probably involved in substrate specificity. They are important for desuccinylation activity, but dispensable for deacetylation activity.</text>
</comment>
<comment type="similarity">
    <text evidence="1">Belongs to the sirtuin family. Class III subfamily.</text>
</comment>
<protein>
    <recommendedName>
        <fullName evidence="1">NAD-dependent protein deacylase</fullName>
        <ecNumber evidence="1 2">2.3.1.286</ecNumber>
    </recommendedName>
    <alternativeName>
        <fullName evidence="1">Regulatory protein SIR2 homolog</fullName>
    </alternativeName>
</protein>